<keyword id="KW-0472">Membrane</keyword>
<keyword id="KW-0496">Mitochondrion</keyword>
<keyword id="KW-0999">Mitochondrion inner membrane</keyword>
<keyword id="KW-1185">Reference proteome</keyword>
<keyword id="KW-0677">Repeat</keyword>
<keyword id="KW-0812">Transmembrane</keyword>
<keyword id="KW-1133">Transmembrane helix</keyword>
<keyword id="KW-0813">Transport</keyword>
<name>YID3_SCHPO</name>
<dbReference type="EMBL" id="CU329670">
    <property type="protein sequence ID" value="CAB61452.1"/>
    <property type="molecule type" value="Genomic_DNA"/>
</dbReference>
<dbReference type="PIR" id="T50159">
    <property type="entry name" value="T50159"/>
</dbReference>
<dbReference type="SMR" id="Q9UTD6"/>
<dbReference type="BioGRID" id="278416">
    <property type="interactions" value="7"/>
</dbReference>
<dbReference type="FunCoup" id="Q9UTD6">
    <property type="interactions" value="86"/>
</dbReference>
<dbReference type="PaxDb" id="4896-SPAC227.03c.1"/>
<dbReference type="EnsemblFungi" id="SPAC227.03c.1">
    <property type="protein sequence ID" value="SPAC227.03c.1:pep"/>
    <property type="gene ID" value="SPAC227.03c"/>
</dbReference>
<dbReference type="KEGG" id="spo:2541928"/>
<dbReference type="PomBase" id="SPAC227.03c"/>
<dbReference type="VEuPathDB" id="FungiDB:SPAC227.03c"/>
<dbReference type="eggNOG" id="KOG0764">
    <property type="taxonomic scope" value="Eukaryota"/>
</dbReference>
<dbReference type="HOGENOM" id="CLU_015166_6_1_1"/>
<dbReference type="InParanoid" id="Q9UTD6"/>
<dbReference type="OMA" id="AFYNGMG"/>
<dbReference type="PhylomeDB" id="Q9UTD6"/>
<dbReference type="PRO" id="PR:Q9UTD6"/>
<dbReference type="Proteomes" id="UP000002485">
    <property type="component" value="Chromosome I"/>
</dbReference>
<dbReference type="GO" id="GO:0005783">
    <property type="term" value="C:endoplasmic reticulum"/>
    <property type="evidence" value="ECO:0007005"/>
    <property type="project" value="PomBase"/>
</dbReference>
<dbReference type="GO" id="GO:0005743">
    <property type="term" value="C:mitochondrial inner membrane"/>
    <property type="evidence" value="ECO:0000250"/>
    <property type="project" value="PomBase"/>
</dbReference>
<dbReference type="GO" id="GO:0051724">
    <property type="term" value="F:NAD transmembrane transporter activity"/>
    <property type="evidence" value="ECO:0000318"/>
    <property type="project" value="GO_Central"/>
</dbReference>
<dbReference type="GO" id="GO:1990549">
    <property type="term" value="P:mitochondrial NAD transmembrane transport"/>
    <property type="evidence" value="ECO:0000266"/>
    <property type="project" value="PomBase"/>
</dbReference>
<dbReference type="GO" id="GO:0035352">
    <property type="term" value="P:NAD transmembrane transport"/>
    <property type="evidence" value="ECO:0000318"/>
    <property type="project" value="GO_Central"/>
</dbReference>
<dbReference type="Gene3D" id="1.50.40.10">
    <property type="entry name" value="Mitochondrial carrier domain"/>
    <property type="match status" value="2"/>
</dbReference>
<dbReference type="InterPro" id="IPR018108">
    <property type="entry name" value="Mitochondrial_sb/sol_carrier"/>
</dbReference>
<dbReference type="InterPro" id="IPR023395">
    <property type="entry name" value="Mt_carrier_dom_sf"/>
</dbReference>
<dbReference type="InterPro" id="IPR044712">
    <property type="entry name" value="SLC25A32-like"/>
</dbReference>
<dbReference type="PANTHER" id="PTHR45683">
    <property type="entry name" value="MITOCHONDRIAL NICOTINAMIDE ADENINE DINUCLEOTIDE TRANSPORTER 1-RELATED-RELATED"/>
    <property type="match status" value="1"/>
</dbReference>
<dbReference type="Pfam" id="PF00153">
    <property type="entry name" value="Mito_carr"/>
    <property type="match status" value="4"/>
</dbReference>
<dbReference type="SUPFAM" id="SSF103506">
    <property type="entry name" value="Mitochondrial carrier"/>
    <property type="match status" value="1"/>
</dbReference>
<dbReference type="PROSITE" id="PS50920">
    <property type="entry name" value="SOLCAR"/>
    <property type="match status" value="3"/>
</dbReference>
<comment type="subcellular location">
    <subcellularLocation>
        <location evidence="2">Mitochondrion inner membrane</location>
        <topology evidence="2">Multi-pass membrane protein</topology>
    </subcellularLocation>
</comment>
<comment type="similarity">
    <text evidence="2">Belongs to the mitochondrial carrier (TC 2.A.29) family.</text>
</comment>
<feature type="chain" id="PRO_0000310798" description="Uncharacterized mitochondrial carrier C227.03c">
    <location>
        <begin position="1"/>
        <end position="371"/>
    </location>
</feature>
<feature type="transmembrane region" description="Helical; Name=1" evidence="1">
    <location>
        <begin position="9"/>
        <end position="29"/>
    </location>
</feature>
<feature type="transmembrane region" description="Helical; Name=2" evidence="1">
    <location>
        <begin position="73"/>
        <end position="93"/>
    </location>
</feature>
<feature type="transmembrane region" description="Helical; Name=3" evidence="1">
    <location>
        <begin position="137"/>
        <end position="157"/>
    </location>
</feature>
<feature type="transmembrane region" description="Helical; Name=4" evidence="1">
    <location>
        <begin position="253"/>
        <end position="273"/>
    </location>
</feature>
<feature type="transmembrane region" description="Helical; Name=5" evidence="1">
    <location>
        <begin position="290"/>
        <end position="310"/>
    </location>
</feature>
<feature type="transmembrane region" description="Helical; Name=6" evidence="1">
    <location>
        <begin position="341"/>
        <end position="362"/>
    </location>
</feature>
<feature type="repeat" description="Solcar 1">
    <location>
        <begin position="3"/>
        <end position="98"/>
    </location>
</feature>
<feature type="repeat" description="Solcar 2">
    <location>
        <begin position="131"/>
        <end position="276"/>
    </location>
</feature>
<feature type="repeat" description="Solcar 3">
    <location>
        <begin position="284"/>
        <end position="369"/>
    </location>
</feature>
<sequence length="371" mass="41329">MVDDSLKDAIAGGAAGLASSLVVAPLDVVKTRKQAQKAFYSTGGGKNTMVLGGTLSSMRTIFHNEGIAGLYRGVGPMMLGYLPSWSIYFVVYEKCKVLFGVNKKYTSLHEIDSSKVGIKASLDSSDKQFYRYWGGQIFSAVIAGAASVTLTNPIWVVKTRLVTQSHPRASSFVDKIAAATTVQFRNLQTDAPSVKWRMPRFWLKRRTNVKSSPSQHPVNPPTGPACSPAYNNTFDAFRKIYKYEGLAAFYRGLFPSLFGTLHVGIQFPLYEYFKSFLDDFFGKKSNFHIVLAATLSKIAASTVTYPHEVLRTRLQSLDAPTHNSATLLIRDIWRSEGWRKYYSGMATNFIRTIPASSVTFLSFEIVRKWLN</sequence>
<gene>
    <name type="ORF">SPAC227.03c</name>
</gene>
<reference key="1">
    <citation type="journal article" date="2002" name="Nature">
        <title>The genome sequence of Schizosaccharomyces pombe.</title>
        <authorList>
            <person name="Wood V."/>
            <person name="Gwilliam R."/>
            <person name="Rajandream M.A."/>
            <person name="Lyne M.H."/>
            <person name="Lyne R."/>
            <person name="Stewart A."/>
            <person name="Sgouros J.G."/>
            <person name="Peat N."/>
            <person name="Hayles J."/>
            <person name="Baker S.G."/>
            <person name="Basham D."/>
            <person name="Bowman S."/>
            <person name="Brooks K."/>
            <person name="Brown D."/>
            <person name="Brown S."/>
            <person name="Chillingworth T."/>
            <person name="Churcher C.M."/>
            <person name="Collins M."/>
            <person name="Connor R."/>
            <person name="Cronin A."/>
            <person name="Davis P."/>
            <person name="Feltwell T."/>
            <person name="Fraser A."/>
            <person name="Gentles S."/>
            <person name="Goble A."/>
            <person name="Hamlin N."/>
            <person name="Harris D.E."/>
            <person name="Hidalgo J."/>
            <person name="Hodgson G."/>
            <person name="Holroyd S."/>
            <person name="Hornsby T."/>
            <person name="Howarth S."/>
            <person name="Huckle E.J."/>
            <person name="Hunt S."/>
            <person name="Jagels K."/>
            <person name="James K.D."/>
            <person name="Jones L."/>
            <person name="Jones M."/>
            <person name="Leather S."/>
            <person name="McDonald S."/>
            <person name="McLean J."/>
            <person name="Mooney P."/>
            <person name="Moule S."/>
            <person name="Mungall K.L."/>
            <person name="Murphy L.D."/>
            <person name="Niblett D."/>
            <person name="Odell C."/>
            <person name="Oliver K."/>
            <person name="O'Neil S."/>
            <person name="Pearson D."/>
            <person name="Quail M.A."/>
            <person name="Rabbinowitsch E."/>
            <person name="Rutherford K.M."/>
            <person name="Rutter S."/>
            <person name="Saunders D."/>
            <person name="Seeger K."/>
            <person name="Sharp S."/>
            <person name="Skelton J."/>
            <person name="Simmonds M.N."/>
            <person name="Squares R."/>
            <person name="Squares S."/>
            <person name="Stevens K."/>
            <person name="Taylor K."/>
            <person name="Taylor R.G."/>
            <person name="Tivey A."/>
            <person name="Walsh S.V."/>
            <person name="Warren T."/>
            <person name="Whitehead S."/>
            <person name="Woodward J.R."/>
            <person name="Volckaert G."/>
            <person name="Aert R."/>
            <person name="Robben J."/>
            <person name="Grymonprez B."/>
            <person name="Weltjens I."/>
            <person name="Vanstreels E."/>
            <person name="Rieger M."/>
            <person name="Schaefer M."/>
            <person name="Mueller-Auer S."/>
            <person name="Gabel C."/>
            <person name="Fuchs M."/>
            <person name="Duesterhoeft A."/>
            <person name="Fritzc C."/>
            <person name="Holzer E."/>
            <person name="Moestl D."/>
            <person name="Hilbert H."/>
            <person name="Borzym K."/>
            <person name="Langer I."/>
            <person name="Beck A."/>
            <person name="Lehrach H."/>
            <person name="Reinhardt R."/>
            <person name="Pohl T.M."/>
            <person name="Eger P."/>
            <person name="Zimmermann W."/>
            <person name="Wedler H."/>
            <person name="Wambutt R."/>
            <person name="Purnelle B."/>
            <person name="Goffeau A."/>
            <person name="Cadieu E."/>
            <person name="Dreano S."/>
            <person name="Gloux S."/>
            <person name="Lelaure V."/>
            <person name="Mottier S."/>
            <person name="Galibert F."/>
            <person name="Aves S.J."/>
            <person name="Xiang Z."/>
            <person name="Hunt C."/>
            <person name="Moore K."/>
            <person name="Hurst S.M."/>
            <person name="Lucas M."/>
            <person name="Rochet M."/>
            <person name="Gaillardin C."/>
            <person name="Tallada V.A."/>
            <person name="Garzon A."/>
            <person name="Thode G."/>
            <person name="Daga R.R."/>
            <person name="Cruzado L."/>
            <person name="Jimenez J."/>
            <person name="Sanchez M."/>
            <person name="del Rey F."/>
            <person name="Benito J."/>
            <person name="Dominguez A."/>
            <person name="Revuelta J.L."/>
            <person name="Moreno S."/>
            <person name="Armstrong J."/>
            <person name="Forsburg S.L."/>
            <person name="Cerutti L."/>
            <person name="Lowe T."/>
            <person name="McCombie W.R."/>
            <person name="Paulsen I."/>
            <person name="Potashkin J."/>
            <person name="Shpakovski G.V."/>
            <person name="Ussery D."/>
            <person name="Barrell B.G."/>
            <person name="Nurse P."/>
        </authorList>
    </citation>
    <scope>NUCLEOTIDE SEQUENCE [LARGE SCALE GENOMIC DNA]</scope>
    <source>
        <strain>972 / ATCC 24843</strain>
    </source>
</reference>
<protein>
    <recommendedName>
        <fullName>Uncharacterized mitochondrial carrier C227.03c</fullName>
    </recommendedName>
</protein>
<organism>
    <name type="scientific">Schizosaccharomyces pombe (strain 972 / ATCC 24843)</name>
    <name type="common">Fission yeast</name>
    <dbReference type="NCBI Taxonomy" id="284812"/>
    <lineage>
        <taxon>Eukaryota</taxon>
        <taxon>Fungi</taxon>
        <taxon>Dikarya</taxon>
        <taxon>Ascomycota</taxon>
        <taxon>Taphrinomycotina</taxon>
        <taxon>Schizosaccharomycetes</taxon>
        <taxon>Schizosaccharomycetales</taxon>
        <taxon>Schizosaccharomycetaceae</taxon>
        <taxon>Schizosaccharomyces</taxon>
    </lineage>
</organism>
<proteinExistence type="inferred from homology"/>
<accession>Q9UTD6</accession>
<evidence type="ECO:0000255" key="1"/>
<evidence type="ECO:0000305" key="2"/>